<feature type="chain" id="PRO_0000384345" description="Mitochondrial distribution and morphology protein 34">
    <location>
        <begin position="1"/>
        <end position="542"/>
    </location>
</feature>
<feature type="domain" description="SMP-LTD" evidence="1">
    <location>
        <begin position="1"/>
        <end position="216"/>
    </location>
</feature>
<feature type="region of interest" description="Disordered" evidence="2">
    <location>
        <begin position="27"/>
        <end position="58"/>
    </location>
</feature>
<feature type="region of interest" description="Disordered" evidence="2">
    <location>
        <begin position="372"/>
        <end position="435"/>
    </location>
</feature>
<feature type="compositionally biased region" description="Low complexity" evidence="2">
    <location>
        <begin position="31"/>
        <end position="48"/>
    </location>
</feature>
<feature type="compositionally biased region" description="Basic and acidic residues" evidence="2">
    <location>
        <begin position="49"/>
        <end position="58"/>
    </location>
</feature>
<feature type="compositionally biased region" description="Basic residues" evidence="2">
    <location>
        <begin position="379"/>
        <end position="394"/>
    </location>
</feature>
<feature type="compositionally biased region" description="Low complexity" evidence="2">
    <location>
        <begin position="403"/>
        <end position="414"/>
    </location>
</feature>
<gene>
    <name evidence="1" type="primary">MDM34</name>
    <name type="ordered locus">KLTH0G01562g</name>
</gene>
<comment type="function">
    <text evidence="1">Component of the ERMES/MDM complex, which serves as a molecular tether to connect the endoplasmic reticulum (ER) and mitochondria. Components of this complex are involved in the control of mitochondrial shape and protein biogenesis, and function in nonvesicular lipid trafficking between the ER and mitochondria. MDM34 is required for the interaction of the ER-resident membrane protein MMM1 and the outer mitochondrial membrane-resident beta-barrel protein MDM10.</text>
</comment>
<comment type="subunit">
    <text evidence="1">Component of the ER-mitochondria encounter structure (ERMES) or MDM complex, composed of MMM1, MDM10, MDM12 and MDM34.</text>
</comment>
<comment type="subcellular location">
    <subcellularLocation>
        <location evidence="1">Mitochondrion outer membrane</location>
        <topology evidence="1">Multi-pass membrane protein</topology>
    </subcellularLocation>
    <text evidence="1">The ERMES/MDM complex localizes to a few discrete foci (around 10 per single cell), that represent mitochondria-endoplasmic reticulum junctions. These foci are often found next to mtDNA nucleoids.</text>
</comment>
<comment type="domain">
    <text evidence="1">Lacks alpha-helical transmembrane segments, suggesting that it resides in the membrane via beta-sheet conformations similar to those predicted for other outer membrane proteins and porin.</text>
</comment>
<comment type="domain">
    <text evidence="1">The SMP-LTD domain is a barrel-like domain that can bind various types of glycerophospholipids in its interior and mediate their transfer between two adjacent bilayers.</text>
</comment>
<comment type="similarity">
    <text evidence="1">Belongs to the MDM34 family.</text>
</comment>
<name>MDM34_LACTC</name>
<dbReference type="EMBL" id="CU928171">
    <property type="protein sequence ID" value="CAR24672.1"/>
    <property type="molecule type" value="Genomic_DNA"/>
</dbReference>
<dbReference type="RefSeq" id="XP_002555109.1">
    <property type="nucleotide sequence ID" value="XM_002555063.1"/>
</dbReference>
<dbReference type="FunCoup" id="C5DLL1">
    <property type="interactions" value="76"/>
</dbReference>
<dbReference type="STRING" id="559295.C5DLL1"/>
<dbReference type="GeneID" id="8293367"/>
<dbReference type="KEGG" id="lth:KLTH0G01562g"/>
<dbReference type="eggNOG" id="ENOG502QT3W">
    <property type="taxonomic scope" value="Eukaryota"/>
</dbReference>
<dbReference type="HOGENOM" id="CLU_036329_0_0_1"/>
<dbReference type="InParanoid" id="C5DLL1"/>
<dbReference type="OMA" id="PGCLERQ"/>
<dbReference type="OrthoDB" id="17927at2759"/>
<dbReference type="Proteomes" id="UP000002036">
    <property type="component" value="Chromosome G"/>
</dbReference>
<dbReference type="GO" id="GO:0032865">
    <property type="term" value="C:ERMES complex"/>
    <property type="evidence" value="ECO:0007669"/>
    <property type="project" value="UniProtKB-UniRule"/>
</dbReference>
<dbReference type="GO" id="GO:0008289">
    <property type="term" value="F:lipid binding"/>
    <property type="evidence" value="ECO:0007669"/>
    <property type="project" value="UniProtKB-KW"/>
</dbReference>
<dbReference type="GO" id="GO:0000002">
    <property type="term" value="P:mitochondrial genome maintenance"/>
    <property type="evidence" value="ECO:0007669"/>
    <property type="project" value="UniProtKB-UniRule"/>
</dbReference>
<dbReference type="GO" id="GO:1990456">
    <property type="term" value="P:mitochondrion-endoplasmic reticulum membrane tethering"/>
    <property type="evidence" value="ECO:0007669"/>
    <property type="project" value="TreeGrafter"/>
</dbReference>
<dbReference type="GO" id="GO:0015914">
    <property type="term" value="P:phospholipid transport"/>
    <property type="evidence" value="ECO:0007669"/>
    <property type="project" value="TreeGrafter"/>
</dbReference>
<dbReference type="HAMAP" id="MF_03105">
    <property type="entry name" value="Mdm34"/>
    <property type="match status" value="1"/>
</dbReference>
<dbReference type="InterPro" id="IPR027536">
    <property type="entry name" value="Mdm34"/>
</dbReference>
<dbReference type="InterPro" id="IPR031468">
    <property type="entry name" value="SMP_LBD"/>
</dbReference>
<dbReference type="PANTHER" id="PTHR28185">
    <property type="entry name" value="MITOCHONDRIAL DISTRIBUTION AND MORPHOLOGY PROTEIN 34"/>
    <property type="match status" value="1"/>
</dbReference>
<dbReference type="PANTHER" id="PTHR28185:SF1">
    <property type="entry name" value="MITOCHONDRIAL DISTRIBUTION AND MORPHOLOGY PROTEIN 34"/>
    <property type="match status" value="1"/>
</dbReference>
<dbReference type="PROSITE" id="PS51847">
    <property type="entry name" value="SMP"/>
    <property type="match status" value="1"/>
</dbReference>
<proteinExistence type="inferred from homology"/>
<organism>
    <name type="scientific">Lachancea thermotolerans (strain ATCC 56472 / CBS 6340 / NRRL Y-8284)</name>
    <name type="common">Yeast</name>
    <name type="synonym">Kluyveromyces thermotolerans</name>
    <dbReference type="NCBI Taxonomy" id="559295"/>
    <lineage>
        <taxon>Eukaryota</taxon>
        <taxon>Fungi</taxon>
        <taxon>Dikarya</taxon>
        <taxon>Ascomycota</taxon>
        <taxon>Saccharomycotina</taxon>
        <taxon>Saccharomycetes</taxon>
        <taxon>Saccharomycetales</taxon>
        <taxon>Saccharomycetaceae</taxon>
        <taxon>Lachancea</taxon>
    </lineage>
</organism>
<protein>
    <recommendedName>
        <fullName evidence="1">Mitochondrial distribution and morphology protein 34</fullName>
    </recommendedName>
</protein>
<evidence type="ECO:0000255" key="1">
    <source>
        <dbReference type="HAMAP-Rule" id="MF_03105"/>
    </source>
</evidence>
<evidence type="ECO:0000256" key="2">
    <source>
        <dbReference type="SAM" id="MobiDB-lite"/>
    </source>
</evidence>
<sequence length="542" mass="60252">MSFRFNKGAFEDNSFNEQIREALTSALNSKTQSSSQTAPANTTNSAATDEVKQETRGPKRLDILKSGISVSKVNFPSTPQLEILDLDVSAQSRSLLKGICKVSCKNAMLEINTEIEANLLLLYTNDGPSFTTPRLISNDSFTVPITMTFNQIELEAITNIFVKNNSVGISFNDVNLDFDFDCSIKLLQSSIEKRLKGSMETVFKEVLPSVIFSMSQRWFTHGESTCNSASDDKSAGRQVENHSHTPRTILEDCDLEDLSPANMLRLSTLVSSRQSLSLNPTAMNTLSTIPGCLERQNLHRFNSRIPALSNFYPDFYEVESPHLKAFGRSVSTNVISSGKLEHHNALPQRVLDERSYDLKTIASVQSRIFERSSGDGTAIRRRKIKMGKKSKSKKAQSQDIENSSPTVVMPSSPSLEPSAVSTPEALHSPQPTTAVQSPELLAENSESVSIPALILPTQADHYTLPVKTSAPKLNLLEEAHYLNRKREFQKLRTSLYSPIRSNRFNLNKEMERPILEHKGLNFVGLTHGLNWGSEDLPPPYRG</sequence>
<reference key="1">
    <citation type="journal article" date="2009" name="Genome Res.">
        <title>Comparative genomics of protoploid Saccharomycetaceae.</title>
        <authorList>
            <consortium name="The Genolevures Consortium"/>
            <person name="Souciet J.-L."/>
            <person name="Dujon B."/>
            <person name="Gaillardin C."/>
            <person name="Johnston M."/>
            <person name="Baret P.V."/>
            <person name="Cliften P."/>
            <person name="Sherman D.J."/>
            <person name="Weissenbach J."/>
            <person name="Westhof E."/>
            <person name="Wincker P."/>
            <person name="Jubin C."/>
            <person name="Poulain J."/>
            <person name="Barbe V."/>
            <person name="Segurens B."/>
            <person name="Artiguenave F."/>
            <person name="Anthouard V."/>
            <person name="Vacherie B."/>
            <person name="Val M.-E."/>
            <person name="Fulton R.S."/>
            <person name="Minx P."/>
            <person name="Wilson R."/>
            <person name="Durrens P."/>
            <person name="Jean G."/>
            <person name="Marck C."/>
            <person name="Martin T."/>
            <person name="Nikolski M."/>
            <person name="Rolland T."/>
            <person name="Seret M.-L."/>
            <person name="Casaregola S."/>
            <person name="Despons L."/>
            <person name="Fairhead C."/>
            <person name="Fischer G."/>
            <person name="Lafontaine I."/>
            <person name="Leh V."/>
            <person name="Lemaire M."/>
            <person name="de Montigny J."/>
            <person name="Neuveglise C."/>
            <person name="Thierry A."/>
            <person name="Blanc-Lenfle I."/>
            <person name="Bleykasten C."/>
            <person name="Diffels J."/>
            <person name="Fritsch E."/>
            <person name="Frangeul L."/>
            <person name="Goeffon A."/>
            <person name="Jauniaux N."/>
            <person name="Kachouri-Lafond R."/>
            <person name="Payen C."/>
            <person name="Potier S."/>
            <person name="Pribylova L."/>
            <person name="Ozanne C."/>
            <person name="Richard G.-F."/>
            <person name="Sacerdot C."/>
            <person name="Straub M.-L."/>
            <person name="Talla E."/>
        </authorList>
    </citation>
    <scope>NUCLEOTIDE SEQUENCE [LARGE SCALE GENOMIC DNA]</scope>
    <source>
        <strain>ATCC 56472 / CBS 6340 / NRRL Y-8284</strain>
    </source>
</reference>
<keyword id="KW-0445">Lipid transport</keyword>
<keyword id="KW-0446">Lipid-binding</keyword>
<keyword id="KW-0472">Membrane</keyword>
<keyword id="KW-0496">Mitochondrion</keyword>
<keyword id="KW-1000">Mitochondrion outer membrane</keyword>
<keyword id="KW-1185">Reference proteome</keyword>
<keyword id="KW-0812">Transmembrane</keyword>
<keyword id="KW-1134">Transmembrane beta strand</keyword>
<keyword id="KW-0813">Transport</keyword>
<accession>C5DLL1</accession>